<keyword id="KW-0963">Cytoplasm</keyword>
<keyword id="KW-0328">Glycosyltransferase</keyword>
<keyword id="KW-0460">Magnesium</keyword>
<keyword id="KW-0479">Metal-binding</keyword>
<keyword id="KW-0547">Nucleotide-binding</keyword>
<keyword id="KW-0660">Purine salvage</keyword>
<keyword id="KW-0808">Transferase</keyword>
<feature type="chain" id="PRO_0000139625" description="Hypoxanthine-guanine phosphoribosyltransferase">
    <location>
        <begin position="1"/>
        <end position="180"/>
    </location>
</feature>
<feature type="active site" description="Proton acceptor" evidence="2">
    <location>
        <position position="103"/>
    </location>
</feature>
<feature type="binding site" evidence="3">
    <location>
        <position position="43"/>
    </location>
    <ligand>
        <name>diphosphate</name>
        <dbReference type="ChEBI" id="CHEBI:33019"/>
    </ligand>
</feature>
<feature type="binding site" evidence="3">
    <location>
        <position position="44"/>
    </location>
    <ligand>
        <name>diphosphate</name>
        <dbReference type="ChEBI" id="CHEBI:33019"/>
    </ligand>
</feature>
<feature type="binding site" evidence="3">
    <location>
        <position position="99"/>
    </location>
    <ligand>
        <name>Mg(2+)</name>
        <dbReference type="ChEBI" id="CHEBI:18420"/>
    </ligand>
</feature>
<feature type="binding site" evidence="3">
    <location>
        <position position="100"/>
    </location>
    <ligand>
        <name>Mg(2+)</name>
        <dbReference type="ChEBI" id="CHEBI:18420"/>
    </ligand>
</feature>
<feature type="binding site" evidence="3">
    <location>
        <position position="131"/>
    </location>
    <ligand>
        <name>GMP</name>
        <dbReference type="ChEBI" id="CHEBI:58115"/>
    </ligand>
</feature>
<feature type="binding site" evidence="3">
    <location>
        <begin position="152"/>
        <end position="153"/>
    </location>
    <ligand>
        <name>GMP</name>
        <dbReference type="ChEBI" id="CHEBI:58115"/>
    </ligand>
</feature>
<feature type="binding site" evidence="3">
    <location>
        <position position="159"/>
    </location>
    <ligand>
        <name>GMP</name>
        <dbReference type="ChEBI" id="CHEBI:58115"/>
    </ligand>
</feature>
<feature type="binding site" evidence="3">
    <location>
        <position position="165"/>
    </location>
    <ligand>
        <name>diphosphate</name>
        <dbReference type="ChEBI" id="CHEBI:33019"/>
    </ligand>
</feature>
<organism>
    <name type="scientific">Streptococcus pyogenes serotype M18 (strain MGAS8232)</name>
    <dbReference type="NCBI Taxonomy" id="186103"/>
    <lineage>
        <taxon>Bacteria</taxon>
        <taxon>Bacillati</taxon>
        <taxon>Bacillota</taxon>
        <taxon>Bacilli</taxon>
        <taxon>Lactobacillales</taxon>
        <taxon>Streptococcaceae</taxon>
        <taxon>Streptococcus</taxon>
    </lineage>
</organism>
<sequence length="180" mass="20725">MLEQDIQKILYSENDIIRKTKKLGEQLTKDYQEKNPLMIGVLKGSVPFMAELMKHIDTHVEIDFMVVSSYHGGTSSSGEVKILKDVDTNIEGRDIIIVEDIIDTGRTLKYLRDMFKYRKANTIKIATLFDKPEGRVVKIEADYVCYNIPNEFIVGFGLDYAENYRNLPYVGVLKEEVYSK</sequence>
<protein>
    <recommendedName>
        <fullName>Hypoxanthine-guanine phosphoribosyltransferase</fullName>
        <shortName>HGPRT</shortName>
        <shortName>HGPRTase</shortName>
        <ecNumber evidence="3">2.4.2.8</ecNumber>
    </recommendedName>
</protein>
<gene>
    <name type="primary">hpt</name>
    <name type="ordered locus">spyM18_0013</name>
</gene>
<evidence type="ECO:0000250" key="1"/>
<evidence type="ECO:0000250" key="2">
    <source>
        <dbReference type="UniProtKB" id="P0A9M2"/>
    </source>
</evidence>
<evidence type="ECO:0000250" key="3">
    <source>
        <dbReference type="UniProtKB" id="P9WHQ9"/>
    </source>
</evidence>
<evidence type="ECO:0000305" key="4"/>
<comment type="function">
    <text evidence="3">Purine salvage pathway enzyme that catalyzes the transfer of the ribosyl-5-phosphate group from 5-phospho-alpha-D-ribose 1-diphosphate (PRPP) to the N9 position of the 6-oxopurines hypoxanthine and guanine to form the corresponding ribonucleotides IMP (inosine 5'-monophosphate) and GMP (guanosine 5'-monophosphate), with the release of PPi.</text>
</comment>
<comment type="catalytic activity">
    <reaction evidence="3">
        <text>IMP + diphosphate = hypoxanthine + 5-phospho-alpha-D-ribose 1-diphosphate</text>
        <dbReference type="Rhea" id="RHEA:17973"/>
        <dbReference type="ChEBI" id="CHEBI:17368"/>
        <dbReference type="ChEBI" id="CHEBI:33019"/>
        <dbReference type="ChEBI" id="CHEBI:58017"/>
        <dbReference type="ChEBI" id="CHEBI:58053"/>
        <dbReference type="EC" id="2.4.2.8"/>
    </reaction>
    <physiologicalReaction direction="right-to-left" evidence="3">
        <dbReference type="Rhea" id="RHEA:17975"/>
    </physiologicalReaction>
</comment>
<comment type="catalytic activity">
    <reaction evidence="3">
        <text>GMP + diphosphate = guanine + 5-phospho-alpha-D-ribose 1-diphosphate</text>
        <dbReference type="Rhea" id="RHEA:25424"/>
        <dbReference type="ChEBI" id="CHEBI:16235"/>
        <dbReference type="ChEBI" id="CHEBI:33019"/>
        <dbReference type="ChEBI" id="CHEBI:58017"/>
        <dbReference type="ChEBI" id="CHEBI:58115"/>
        <dbReference type="EC" id="2.4.2.8"/>
    </reaction>
    <physiologicalReaction direction="right-to-left" evidence="3">
        <dbReference type="Rhea" id="RHEA:25426"/>
    </physiologicalReaction>
</comment>
<comment type="cofactor">
    <cofactor evidence="3">
        <name>Mg(2+)</name>
        <dbReference type="ChEBI" id="CHEBI:18420"/>
    </cofactor>
</comment>
<comment type="pathway">
    <text evidence="3">Purine metabolism; IMP biosynthesis via salvage pathway; IMP from hypoxanthine: step 1/1.</text>
</comment>
<comment type="pathway">
    <text evidence="3">Purine metabolism; GMP biosynthesis via salvage pathway; GMP from guanine: step 1/1.</text>
</comment>
<comment type="subcellular location">
    <subcellularLocation>
        <location evidence="1">Cytoplasm</location>
    </subcellularLocation>
</comment>
<comment type="similarity">
    <text evidence="4">Belongs to the purine/pyrimidine phosphoribosyltransferase family.</text>
</comment>
<reference key="1">
    <citation type="journal article" date="2002" name="Proc. Natl. Acad. Sci. U.S.A.">
        <title>Genome sequence and comparative microarray analysis of serotype M18 group A Streptococcus strains associated with acute rheumatic fever outbreaks.</title>
        <authorList>
            <person name="Smoot J.C."/>
            <person name="Barbian K.D."/>
            <person name="Van Gompel J.J."/>
            <person name="Smoot L.M."/>
            <person name="Chaussee M.S."/>
            <person name="Sylva G.L."/>
            <person name="Sturdevant D.E."/>
            <person name="Ricklefs S.M."/>
            <person name="Porcella S.F."/>
            <person name="Parkins L.D."/>
            <person name="Beres S.B."/>
            <person name="Campbell D.S."/>
            <person name="Smith T.M."/>
            <person name="Zhang Q."/>
            <person name="Kapur V."/>
            <person name="Daly J.A."/>
            <person name="Veasy L.G."/>
            <person name="Musser J.M."/>
        </authorList>
    </citation>
    <scope>NUCLEOTIDE SEQUENCE [LARGE SCALE GENOMIC DNA]</scope>
    <source>
        <strain>MGAS8232</strain>
    </source>
</reference>
<name>HGPRT_STRP8</name>
<accession>Q7CNQ9</accession>
<proteinExistence type="inferred from homology"/>
<dbReference type="EC" id="2.4.2.8" evidence="3"/>
<dbReference type="EMBL" id="AE009949">
    <property type="protein sequence ID" value="AAL96846.1"/>
    <property type="molecule type" value="Genomic_DNA"/>
</dbReference>
<dbReference type="RefSeq" id="WP_002981912.1">
    <property type="nucleotide sequence ID" value="NC_003485.1"/>
</dbReference>
<dbReference type="SMR" id="Q7CNQ9"/>
<dbReference type="GeneID" id="69899963"/>
<dbReference type="KEGG" id="spm:spyM18_0013"/>
<dbReference type="HOGENOM" id="CLU_073615_0_0_9"/>
<dbReference type="UniPathway" id="UPA00591">
    <property type="reaction ID" value="UER00648"/>
</dbReference>
<dbReference type="UniPathway" id="UPA00909">
    <property type="reaction ID" value="UER00887"/>
</dbReference>
<dbReference type="GO" id="GO:0005829">
    <property type="term" value="C:cytosol"/>
    <property type="evidence" value="ECO:0007669"/>
    <property type="project" value="TreeGrafter"/>
</dbReference>
<dbReference type="GO" id="GO:0052657">
    <property type="term" value="F:guanine phosphoribosyltransferase activity"/>
    <property type="evidence" value="ECO:0007669"/>
    <property type="project" value="RHEA"/>
</dbReference>
<dbReference type="GO" id="GO:0004422">
    <property type="term" value="F:hypoxanthine phosphoribosyltransferase activity"/>
    <property type="evidence" value="ECO:0007669"/>
    <property type="project" value="InterPro"/>
</dbReference>
<dbReference type="GO" id="GO:0000287">
    <property type="term" value="F:magnesium ion binding"/>
    <property type="evidence" value="ECO:0007669"/>
    <property type="project" value="TreeGrafter"/>
</dbReference>
<dbReference type="GO" id="GO:0000166">
    <property type="term" value="F:nucleotide binding"/>
    <property type="evidence" value="ECO:0007669"/>
    <property type="project" value="UniProtKB-KW"/>
</dbReference>
<dbReference type="GO" id="GO:0032263">
    <property type="term" value="P:GMP salvage"/>
    <property type="evidence" value="ECO:0007669"/>
    <property type="project" value="UniProtKB-UniPathway"/>
</dbReference>
<dbReference type="GO" id="GO:0006178">
    <property type="term" value="P:guanine salvage"/>
    <property type="evidence" value="ECO:0007669"/>
    <property type="project" value="TreeGrafter"/>
</dbReference>
<dbReference type="GO" id="GO:0046100">
    <property type="term" value="P:hypoxanthine metabolic process"/>
    <property type="evidence" value="ECO:0007669"/>
    <property type="project" value="TreeGrafter"/>
</dbReference>
<dbReference type="GO" id="GO:0032264">
    <property type="term" value="P:IMP salvage"/>
    <property type="evidence" value="ECO:0007669"/>
    <property type="project" value="UniProtKB-UniPathway"/>
</dbReference>
<dbReference type="GO" id="GO:0006166">
    <property type="term" value="P:purine ribonucleoside salvage"/>
    <property type="evidence" value="ECO:0007669"/>
    <property type="project" value="UniProtKB-KW"/>
</dbReference>
<dbReference type="CDD" id="cd06223">
    <property type="entry name" value="PRTases_typeI"/>
    <property type="match status" value="1"/>
</dbReference>
<dbReference type="FunFam" id="3.40.50.2020:FF:000006">
    <property type="entry name" value="Hypoxanthine phosphoribosyltransferase"/>
    <property type="match status" value="1"/>
</dbReference>
<dbReference type="Gene3D" id="3.40.50.2020">
    <property type="match status" value="1"/>
</dbReference>
<dbReference type="InterPro" id="IPR050408">
    <property type="entry name" value="HGPRT"/>
</dbReference>
<dbReference type="InterPro" id="IPR005904">
    <property type="entry name" value="Hxn_phspho_trans"/>
</dbReference>
<dbReference type="InterPro" id="IPR000836">
    <property type="entry name" value="PRibTrfase_dom"/>
</dbReference>
<dbReference type="InterPro" id="IPR029057">
    <property type="entry name" value="PRTase-like"/>
</dbReference>
<dbReference type="NCBIfam" id="TIGR01203">
    <property type="entry name" value="HGPRTase"/>
    <property type="match status" value="1"/>
</dbReference>
<dbReference type="PANTHER" id="PTHR43340:SF1">
    <property type="entry name" value="HYPOXANTHINE PHOSPHORIBOSYLTRANSFERASE"/>
    <property type="match status" value="1"/>
</dbReference>
<dbReference type="PANTHER" id="PTHR43340">
    <property type="entry name" value="HYPOXANTHINE-GUANINE PHOSPHORIBOSYLTRANSFERASE"/>
    <property type="match status" value="1"/>
</dbReference>
<dbReference type="Pfam" id="PF00156">
    <property type="entry name" value="Pribosyltran"/>
    <property type="match status" value="1"/>
</dbReference>
<dbReference type="SUPFAM" id="SSF53271">
    <property type="entry name" value="PRTase-like"/>
    <property type="match status" value="1"/>
</dbReference>
<dbReference type="PROSITE" id="PS00103">
    <property type="entry name" value="PUR_PYR_PR_TRANSFER"/>
    <property type="match status" value="1"/>
</dbReference>